<protein>
    <recommendedName>
        <fullName>Putative biopolymer transport protein ExbB-like 1</fullName>
    </recommendedName>
</protein>
<comment type="function">
    <text evidence="1">Involved in the TonB-dependent energy-dependent transport of various receptor-bound substrates. Protects ExbD from proteolytic degradation and functionally stabilizes TonB (By similarity).</text>
</comment>
<comment type="subcellular location">
    <subcellularLocation>
        <location evidence="3">Cell inner membrane</location>
        <topology evidence="3">Multi-pass membrane protein</topology>
    </subcellularLocation>
</comment>
<comment type="similarity">
    <text evidence="3">Belongs to the ExbB/TolQ family.</text>
</comment>
<accession>Q55834</accession>
<proteinExistence type="inferred from homology"/>
<keyword id="KW-0997">Cell inner membrane</keyword>
<keyword id="KW-1003">Cell membrane</keyword>
<keyword id="KW-0472">Membrane</keyword>
<keyword id="KW-0653">Protein transport</keyword>
<keyword id="KW-1185">Reference proteome</keyword>
<keyword id="KW-0812">Transmembrane</keyword>
<keyword id="KW-1133">Transmembrane helix</keyword>
<keyword id="KW-0813">Transport</keyword>
<feature type="chain" id="PRO_0000145819" description="Putative biopolymer transport protein ExbB-like 1">
    <location>
        <begin position="1"/>
        <end position="254"/>
    </location>
</feature>
<feature type="transmembrane region" description="Helical" evidence="2">
    <location>
        <begin position="39"/>
        <end position="59"/>
    </location>
</feature>
<feature type="transmembrane region" description="Helical" evidence="2">
    <location>
        <begin position="141"/>
        <end position="161"/>
    </location>
</feature>
<feature type="transmembrane region" description="Helical" evidence="2">
    <location>
        <begin position="185"/>
        <end position="205"/>
    </location>
</feature>
<reference key="1">
    <citation type="journal article" date="1995" name="DNA Res.">
        <title>Sequence analysis of the genome of the unicellular cyanobacterium Synechocystis sp. strain PCC6803. I. Sequence features in the 1 Mb region from map positions 64% to 92% of the genome.</title>
        <authorList>
            <person name="Kaneko T."/>
            <person name="Tanaka A."/>
            <person name="Sato S."/>
            <person name="Kotani H."/>
            <person name="Sazuka T."/>
            <person name="Miyajima N."/>
            <person name="Sugiura M."/>
            <person name="Tabata S."/>
        </authorList>
    </citation>
    <scope>NUCLEOTIDE SEQUENCE [LARGE SCALE GENOMIC DNA]</scope>
    <source>
        <strain>ATCC 27184 / PCC 6803 / N-1</strain>
    </source>
</reference>
<reference key="2">
    <citation type="journal article" date="1996" name="DNA Res.">
        <title>Sequence analysis of the genome of the unicellular cyanobacterium Synechocystis sp. strain PCC6803. II. Sequence determination of the entire genome and assignment of potential protein-coding regions.</title>
        <authorList>
            <person name="Kaneko T."/>
            <person name="Sato S."/>
            <person name="Kotani H."/>
            <person name="Tanaka A."/>
            <person name="Asamizu E."/>
            <person name="Nakamura Y."/>
            <person name="Miyajima N."/>
            <person name="Hirosawa M."/>
            <person name="Sugiura M."/>
            <person name="Sasamoto S."/>
            <person name="Kimura T."/>
            <person name="Hosouchi T."/>
            <person name="Matsuno A."/>
            <person name="Muraki A."/>
            <person name="Nakazaki N."/>
            <person name="Naruo K."/>
            <person name="Okumura S."/>
            <person name="Shimpo S."/>
            <person name="Takeuchi C."/>
            <person name="Wada T."/>
            <person name="Watanabe A."/>
            <person name="Yamada M."/>
            <person name="Yasuda M."/>
            <person name="Tabata S."/>
        </authorList>
    </citation>
    <scope>NUCLEOTIDE SEQUENCE [LARGE SCALE GENOMIC DNA]</scope>
    <source>
        <strain>ATCC 27184 / PCC 6803 / Kazusa</strain>
    </source>
</reference>
<sequence>MLDNCKRLLFRKFPCFLSMAPSPLFLTQTPRLLDEFLKGGVVMFPLLLLSILALTTAFERGWFWSRLLIQEDQVVRDVLDAAVEDLVKAREIAEHARHLAIGRFLLAPLKLRHPSPETFRLAMEATADKEFARMRRGDKLLETIIALAPLLGLLGTVTGLIRTFNNLNIGGGGSSAEATQAASGIGEALITTAAGMMVAIFALLVFRVLVSLQSQQMDYFAAVGSELELIYREVWYEPHQPMPNLLMAARIAEP</sequence>
<gene>
    <name type="ordered locus">sll0477</name>
</gene>
<organism>
    <name type="scientific">Synechocystis sp. (strain ATCC 27184 / PCC 6803 / Kazusa)</name>
    <dbReference type="NCBI Taxonomy" id="1111708"/>
    <lineage>
        <taxon>Bacteria</taxon>
        <taxon>Bacillati</taxon>
        <taxon>Cyanobacteriota</taxon>
        <taxon>Cyanophyceae</taxon>
        <taxon>Synechococcales</taxon>
        <taxon>Merismopediaceae</taxon>
        <taxon>Synechocystis</taxon>
    </lineage>
</organism>
<dbReference type="EMBL" id="BA000022">
    <property type="protein sequence ID" value="BAA10590.1"/>
    <property type="molecule type" value="Genomic_DNA"/>
</dbReference>
<dbReference type="PIR" id="S76646">
    <property type="entry name" value="S76646"/>
</dbReference>
<dbReference type="SMR" id="Q55834"/>
<dbReference type="IntAct" id="Q55834">
    <property type="interactions" value="1"/>
</dbReference>
<dbReference type="STRING" id="1148.gene:10500094"/>
<dbReference type="TCDB" id="1.A.30.2.11">
    <property type="family name" value="the h(+)- or na(+)-translocating bacterial flagellar motor/exbbd outer membrane transport energizer (mot/exb) superfamily"/>
</dbReference>
<dbReference type="PaxDb" id="1148-1001752"/>
<dbReference type="EnsemblBacteria" id="BAA10590">
    <property type="protein sequence ID" value="BAA10590"/>
    <property type="gene ID" value="BAA10590"/>
</dbReference>
<dbReference type="KEGG" id="syn:sll0477"/>
<dbReference type="eggNOG" id="COG0811">
    <property type="taxonomic scope" value="Bacteria"/>
</dbReference>
<dbReference type="InParanoid" id="Q55834"/>
<dbReference type="PhylomeDB" id="Q55834"/>
<dbReference type="Proteomes" id="UP000001425">
    <property type="component" value="Chromosome"/>
</dbReference>
<dbReference type="GO" id="GO:0005886">
    <property type="term" value="C:plasma membrane"/>
    <property type="evidence" value="ECO:0000318"/>
    <property type="project" value="GO_Central"/>
</dbReference>
<dbReference type="GO" id="GO:0017038">
    <property type="term" value="P:protein import"/>
    <property type="evidence" value="ECO:0000318"/>
    <property type="project" value="GO_Central"/>
</dbReference>
<dbReference type="InterPro" id="IPR050790">
    <property type="entry name" value="ExbB/TolQ_transport"/>
</dbReference>
<dbReference type="InterPro" id="IPR002898">
    <property type="entry name" value="MotA_ExbB_proton_chnl"/>
</dbReference>
<dbReference type="PANTHER" id="PTHR30625:SF15">
    <property type="entry name" value="BIOPOLYMER TRANSPORT PROTEIN EXBB"/>
    <property type="match status" value="1"/>
</dbReference>
<dbReference type="PANTHER" id="PTHR30625">
    <property type="entry name" value="PROTEIN TOLQ"/>
    <property type="match status" value="1"/>
</dbReference>
<dbReference type="Pfam" id="PF01618">
    <property type="entry name" value="MotA_ExbB"/>
    <property type="match status" value="1"/>
</dbReference>
<evidence type="ECO:0000250" key="1"/>
<evidence type="ECO:0000255" key="2"/>
<evidence type="ECO:0000305" key="3"/>
<name>EXBL1_SYNY3</name>